<dbReference type="EC" id="5.6.1.7" evidence="1"/>
<dbReference type="EMBL" id="AF145252">
    <property type="protein sequence ID" value="AAD37976.1"/>
    <property type="molecule type" value="Genomic_DNA"/>
</dbReference>
<dbReference type="RefSeq" id="WP_012844412.1">
    <property type="nucleotide sequence ID" value="NZ_CP172416.1"/>
</dbReference>
<dbReference type="SMR" id="Q9XCA9"/>
<dbReference type="OMA" id="TDTDKME"/>
<dbReference type="GO" id="GO:0005737">
    <property type="term" value="C:cytoplasm"/>
    <property type="evidence" value="ECO:0007669"/>
    <property type="project" value="UniProtKB-SubCell"/>
</dbReference>
<dbReference type="GO" id="GO:0005524">
    <property type="term" value="F:ATP binding"/>
    <property type="evidence" value="ECO:0007669"/>
    <property type="project" value="UniProtKB-UniRule"/>
</dbReference>
<dbReference type="GO" id="GO:0140662">
    <property type="term" value="F:ATP-dependent protein folding chaperone"/>
    <property type="evidence" value="ECO:0007669"/>
    <property type="project" value="InterPro"/>
</dbReference>
<dbReference type="GO" id="GO:0016853">
    <property type="term" value="F:isomerase activity"/>
    <property type="evidence" value="ECO:0007669"/>
    <property type="project" value="UniProtKB-KW"/>
</dbReference>
<dbReference type="GO" id="GO:0051082">
    <property type="term" value="F:unfolded protein binding"/>
    <property type="evidence" value="ECO:0007669"/>
    <property type="project" value="UniProtKB-UniRule"/>
</dbReference>
<dbReference type="GO" id="GO:0042026">
    <property type="term" value="P:protein refolding"/>
    <property type="evidence" value="ECO:0007669"/>
    <property type="project" value="UniProtKB-UniRule"/>
</dbReference>
<dbReference type="CDD" id="cd03344">
    <property type="entry name" value="GroEL"/>
    <property type="match status" value="1"/>
</dbReference>
<dbReference type="FunFam" id="1.10.560.10:FF:000001">
    <property type="entry name" value="60 kDa chaperonin"/>
    <property type="match status" value="1"/>
</dbReference>
<dbReference type="FunFam" id="3.50.7.10:FF:000001">
    <property type="entry name" value="60 kDa chaperonin"/>
    <property type="match status" value="1"/>
</dbReference>
<dbReference type="Gene3D" id="3.50.7.10">
    <property type="entry name" value="GroEL"/>
    <property type="match status" value="1"/>
</dbReference>
<dbReference type="Gene3D" id="1.10.560.10">
    <property type="entry name" value="GroEL-like equatorial domain"/>
    <property type="match status" value="1"/>
</dbReference>
<dbReference type="Gene3D" id="3.30.260.10">
    <property type="entry name" value="TCP-1-like chaperonin intermediate domain"/>
    <property type="match status" value="1"/>
</dbReference>
<dbReference type="HAMAP" id="MF_00600">
    <property type="entry name" value="CH60"/>
    <property type="match status" value="1"/>
</dbReference>
<dbReference type="InterPro" id="IPR018370">
    <property type="entry name" value="Chaperonin_Cpn60_CS"/>
</dbReference>
<dbReference type="InterPro" id="IPR001844">
    <property type="entry name" value="Cpn60/GroEL"/>
</dbReference>
<dbReference type="InterPro" id="IPR002423">
    <property type="entry name" value="Cpn60/GroEL/TCP-1"/>
</dbReference>
<dbReference type="InterPro" id="IPR027409">
    <property type="entry name" value="GroEL-like_apical_dom_sf"/>
</dbReference>
<dbReference type="InterPro" id="IPR027413">
    <property type="entry name" value="GROEL-like_equatorial_sf"/>
</dbReference>
<dbReference type="InterPro" id="IPR027410">
    <property type="entry name" value="TCP-1-like_intermed_sf"/>
</dbReference>
<dbReference type="NCBIfam" id="TIGR02348">
    <property type="entry name" value="GroEL"/>
    <property type="match status" value="1"/>
</dbReference>
<dbReference type="NCBIfam" id="NF000592">
    <property type="entry name" value="PRK00013.1"/>
    <property type="match status" value="1"/>
</dbReference>
<dbReference type="NCBIfam" id="NF009487">
    <property type="entry name" value="PRK12849.1"/>
    <property type="match status" value="1"/>
</dbReference>
<dbReference type="NCBIfam" id="NF009488">
    <property type="entry name" value="PRK12850.1"/>
    <property type="match status" value="1"/>
</dbReference>
<dbReference type="NCBIfam" id="NF009489">
    <property type="entry name" value="PRK12851.1"/>
    <property type="match status" value="1"/>
</dbReference>
<dbReference type="PANTHER" id="PTHR45633">
    <property type="entry name" value="60 KDA HEAT SHOCK PROTEIN, MITOCHONDRIAL"/>
    <property type="match status" value="1"/>
</dbReference>
<dbReference type="Pfam" id="PF00118">
    <property type="entry name" value="Cpn60_TCP1"/>
    <property type="match status" value="1"/>
</dbReference>
<dbReference type="PRINTS" id="PR00298">
    <property type="entry name" value="CHAPERONIN60"/>
</dbReference>
<dbReference type="SUPFAM" id="SSF52029">
    <property type="entry name" value="GroEL apical domain-like"/>
    <property type="match status" value="1"/>
</dbReference>
<dbReference type="SUPFAM" id="SSF48592">
    <property type="entry name" value="GroEL equatorial domain-like"/>
    <property type="match status" value="1"/>
</dbReference>
<dbReference type="SUPFAM" id="SSF54849">
    <property type="entry name" value="GroEL-intermediate domain like"/>
    <property type="match status" value="1"/>
</dbReference>
<dbReference type="PROSITE" id="PS00296">
    <property type="entry name" value="CHAPERONINS_CPN60"/>
    <property type="match status" value="1"/>
</dbReference>
<sequence>MAAKQITFNADARMALKRGVDKLADAVKVTLGPKGRNVIIEKKFGAPTVTKDGVTVAKEIELEDKLENVGAQMVKEVASKTSDVAGDGTTTATVLAQAILTAGLKSVTAGANPMDLKRGIDKAVEVVVAELRKMSQEVQDKNRIAQVATISANGDKAIGQLIADAFEKVGKDGVITVEEAKGTETTLEVVEGMQFDRGYLSPYFVTNPDTMEAVLEDAYILIHDKKISAMKDLLPILEKVVQTGRPLLIIAEDVEGEALATLVVNKLRGVLKVAAVKAPGFGDRRKAMLEDIAILTGGTVISEEKGYRLENATLDYLGQAERIIVDKDNTTIVGGKGDPAQIKARANQIRQQIEETTSDYDREKLQERLAKLAGGVAVLKIGAATEPEMKEKKARVEDALHATRAAVEEGIVPGGGVAYIRAIAALDKVEVENEDQKIGVQIVQRALEEPLRQIAANAGWEGSIVVQRVKEGQGDFGFNAQTEEFGNLLEQGVIDPTKVARTALENAASVAGLLLTTEAVVAEKPEKEKAAAPSPGDMDF</sequence>
<protein>
    <recommendedName>
        <fullName evidence="1">Chaperonin GroEL</fullName>
        <ecNumber evidence="1">5.6.1.7</ecNumber>
    </recommendedName>
    <alternativeName>
        <fullName evidence="1">60 kDa chaperonin</fullName>
    </alternativeName>
    <alternativeName>
        <fullName evidence="1">Chaperonin-60</fullName>
        <shortName evidence="1">Cpn60</shortName>
    </alternativeName>
</protein>
<proteinExistence type="inferred from homology"/>
<reference key="1">
    <citation type="submission" date="1999-04" db="EMBL/GenBank/DDBJ databases">
        <title>Heat shock in Rhodothermus marinus: cloning and sequence analysis of the groESL, dnaK and dnaJ genes.</title>
        <authorList>
            <person name="Thorolfsdottir E.T.T."/>
            <person name="Backman V.M."/>
            <person name="Blondal T."/>
            <person name="Thorbjarnardottir S.H."/>
            <person name="Palsdottir A."/>
            <person name="Hauksdottir H."/>
            <person name="Kristjansdottir S."/>
            <person name="Eggertsson G."/>
        </authorList>
    </citation>
    <scope>NUCLEOTIDE SEQUENCE [GENOMIC DNA]</scope>
    <source>
        <strain>ITI 376</strain>
    </source>
</reference>
<keyword id="KW-0067">ATP-binding</keyword>
<keyword id="KW-0143">Chaperone</keyword>
<keyword id="KW-0963">Cytoplasm</keyword>
<keyword id="KW-0413">Isomerase</keyword>
<keyword id="KW-0547">Nucleotide-binding</keyword>
<gene>
    <name evidence="1" type="primary">groEL</name>
    <name evidence="1" type="synonym">groL</name>
</gene>
<feature type="chain" id="PRO_0000063508" description="Chaperonin GroEL">
    <location>
        <begin position="1"/>
        <end position="540"/>
    </location>
</feature>
<feature type="binding site" evidence="1">
    <location>
        <begin position="30"/>
        <end position="33"/>
    </location>
    <ligand>
        <name>ATP</name>
        <dbReference type="ChEBI" id="CHEBI:30616"/>
    </ligand>
</feature>
<feature type="binding site" evidence="1">
    <location>
        <position position="51"/>
    </location>
    <ligand>
        <name>ATP</name>
        <dbReference type="ChEBI" id="CHEBI:30616"/>
    </ligand>
</feature>
<feature type="binding site" evidence="1">
    <location>
        <begin position="87"/>
        <end position="91"/>
    </location>
    <ligand>
        <name>ATP</name>
        <dbReference type="ChEBI" id="CHEBI:30616"/>
    </ligand>
</feature>
<feature type="binding site" evidence="1">
    <location>
        <position position="415"/>
    </location>
    <ligand>
        <name>ATP</name>
        <dbReference type="ChEBI" id="CHEBI:30616"/>
    </ligand>
</feature>
<feature type="binding site" evidence="1">
    <location>
        <position position="495"/>
    </location>
    <ligand>
        <name>ATP</name>
        <dbReference type="ChEBI" id="CHEBI:30616"/>
    </ligand>
</feature>
<comment type="function">
    <text evidence="1">Together with its co-chaperonin GroES, plays an essential role in assisting protein folding. The GroEL-GroES system forms a nano-cage that allows encapsulation of the non-native substrate proteins and provides a physical environment optimized to promote and accelerate protein folding.</text>
</comment>
<comment type="catalytic activity">
    <reaction evidence="1">
        <text>ATP + H2O + a folded polypeptide = ADP + phosphate + an unfolded polypeptide.</text>
        <dbReference type="EC" id="5.6.1.7"/>
    </reaction>
</comment>
<comment type="subunit">
    <text evidence="1">Forms a cylinder of 14 subunits composed of two heptameric rings stacked back-to-back. Interacts with the co-chaperonin GroES.</text>
</comment>
<comment type="subcellular location">
    <subcellularLocation>
        <location evidence="1">Cytoplasm</location>
    </subcellularLocation>
</comment>
<comment type="similarity">
    <text evidence="1">Belongs to the chaperonin (HSP60) family.</text>
</comment>
<name>CH60_RHOMR</name>
<accession>Q9XCA9</accession>
<organism>
    <name type="scientific">Rhodothermus marinus</name>
    <name type="common">Rhodothermus obamensis</name>
    <dbReference type="NCBI Taxonomy" id="29549"/>
    <lineage>
        <taxon>Bacteria</taxon>
        <taxon>Pseudomonadati</taxon>
        <taxon>Rhodothermota</taxon>
        <taxon>Rhodothermia</taxon>
        <taxon>Rhodothermales</taxon>
        <taxon>Rhodothermaceae</taxon>
        <taxon>Rhodothermus</taxon>
    </lineage>
</organism>
<evidence type="ECO:0000255" key="1">
    <source>
        <dbReference type="HAMAP-Rule" id="MF_00600"/>
    </source>
</evidence>